<protein>
    <recommendedName>
        <fullName evidence="1">Replication protein E1</fullName>
        <ecNumber evidence="1">5.6.2.4</ecNumber>
    </recommendedName>
    <alternativeName>
        <fullName evidence="1">ATP-dependent helicase E1</fullName>
    </alternativeName>
    <alternativeName>
        <fullName evidence="1">DNA 3'-5' helicase E1</fullName>
    </alternativeName>
</protein>
<evidence type="ECO:0000255" key="1">
    <source>
        <dbReference type="HAMAP-Rule" id="MF_04000"/>
    </source>
</evidence>
<evidence type="ECO:0000256" key="2">
    <source>
        <dbReference type="SAM" id="MobiDB-lite"/>
    </source>
</evidence>
<dbReference type="EC" id="5.6.2.4" evidence="1"/>
<dbReference type="EMBL" id="U85660">
    <property type="protein sequence ID" value="AAB61642.1"/>
    <property type="molecule type" value="Genomic_DNA"/>
</dbReference>
<dbReference type="SMR" id="O40619"/>
<dbReference type="Proteomes" id="UP000126247">
    <property type="component" value="Genome"/>
</dbReference>
<dbReference type="GO" id="GO:0042025">
    <property type="term" value="C:host cell nucleus"/>
    <property type="evidence" value="ECO:0007669"/>
    <property type="project" value="UniProtKB-SubCell"/>
</dbReference>
<dbReference type="GO" id="GO:0005524">
    <property type="term" value="F:ATP binding"/>
    <property type="evidence" value="ECO:0007669"/>
    <property type="project" value="UniProtKB-UniRule"/>
</dbReference>
<dbReference type="GO" id="GO:0016887">
    <property type="term" value="F:ATP hydrolysis activity"/>
    <property type="evidence" value="ECO:0007669"/>
    <property type="project" value="RHEA"/>
</dbReference>
<dbReference type="GO" id="GO:0003677">
    <property type="term" value="F:DNA binding"/>
    <property type="evidence" value="ECO:0007669"/>
    <property type="project" value="UniProtKB-UniRule"/>
</dbReference>
<dbReference type="GO" id="GO:0003678">
    <property type="term" value="F:DNA helicase activity"/>
    <property type="evidence" value="ECO:0007669"/>
    <property type="project" value="UniProtKB-UniRule"/>
</dbReference>
<dbReference type="GO" id="GO:0006260">
    <property type="term" value="P:DNA replication"/>
    <property type="evidence" value="ECO:0007669"/>
    <property type="project" value="UniProtKB-UniRule"/>
</dbReference>
<dbReference type="Gene3D" id="3.40.1310.10">
    <property type="match status" value="1"/>
</dbReference>
<dbReference type="Gene3D" id="3.40.50.300">
    <property type="entry name" value="P-loop containing nucleotide triphosphate hydrolases"/>
    <property type="match status" value="1"/>
</dbReference>
<dbReference type="Gene3D" id="1.10.10.510">
    <property type="entry name" value="Zinc finger, large T-antigen D1 domain"/>
    <property type="match status" value="1"/>
</dbReference>
<dbReference type="HAMAP" id="MF_04000">
    <property type="entry name" value="PPV_E1"/>
    <property type="match status" value="1"/>
</dbReference>
<dbReference type="InterPro" id="IPR014015">
    <property type="entry name" value="Helicase_SF3_DNA-vir"/>
</dbReference>
<dbReference type="InterPro" id="IPR027417">
    <property type="entry name" value="P-loop_NTPase"/>
</dbReference>
<dbReference type="InterPro" id="IPR001177">
    <property type="entry name" value="PPV_DNA_helicase_E1_C"/>
</dbReference>
<dbReference type="InterPro" id="IPR014000">
    <property type="entry name" value="PPV_DNA_helicase_E1_N"/>
</dbReference>
<dbReference type="InterPro" id="IPR046832">
    <property type="entry name" value="PPV_E1_DBD"/>
</dbReference>
<dbReference type="InterPro" id="IPR046935">
    <property type="entry name" value="PPV_E1_DBD_sf"/>
</dbReference>
<dbReference type="InterPro" id="IPR016393">
    <property type="entry name" value="Rep_E1_papillomaV"/>
</dbReference>
<dbReference type="InterPro" id="IPR037102">
    <property type="entry name" value="Znf_lg_T-Ag_D1_dom_sf"/>
</dbReference>
<dbReference type="Pfam" id="PF00519">
    <property type="entry name" value="PPV_E1_C"/>
    <property type="match status" value="1"/>
</dbReference>
<dbReference type="Pfam" id="PF20450">
    <property type="entry name" value="PPV_E1_DBD"/>
    <property type="match status" value="1"/>
</dbReference>
<dbReference type="Pfam" id="PF00524">
    <property type="entry name" value="PPV_E1_N"/>
    <property type="match status" value="1"/>
</dbReference>
<dbReference type="PIRSF" id="PIRSF003383">
    <property type="entry name" value="Rep_E1_papillomaV"/>
    <property type="match status" value="1"/>
</dbReference>
<dbReference type="SUPFAM" id="SSF55464">
    <property type="entry name" value="Origin of replication-binding domain, RBD-like"/>
    <property type="match status" value="1"/>
</dbReference>
<dbReference type="SUPFAM" id="SSF52540">
    <property type="entry name" value="P-loop containing nucleoside triphosphate hydrolases"/>
    <property type="match status" value="1"/>
</dbReference>
<dbReference type="PROSITE" id="PS51206">
    <property type="entry name" value="SF3_HELICASE_1"/>
    <property type="match status" value="1"/>
</dbReference>
<sequence length="606" mass="68933">MADPKGSTSKEGLGDWCILEADCSDLENDFEQLFEQDADSDVSDLLDNGELEQGNSLELFHQQECKQSEEQLQILKRKYLSPKAVAQLSPRLELMSLSPQQKSKRRLFAEQDSGLELSLNNEAEDNAPEVEVPALDSGPVDEGGTGDVDIDYLALLRSSNRKATLMAKFKDAFGVGFNELTRQFKSYKTCCNHRVLAVYAVHDDLFESSKQLLQQHCDYIWVRGIAAMTLYLLCFKAGKNRGTVHKLLTSMLNVQEQQILSEPPKLRNTAAALFWYKGGMGSGAFTYGKYPDWIAQQTVLGHQNAEASTFDFSVMVQWAFDNNHVDEADIAYQYARLAPEDSNAVAWLAHNSQAKFVRDCAAMVRFYKNLQMREMSMSEWIYTRINEVEGEGHWSSIVKFLGYQGVNFIMFLAALKNFLHAVPKQNCILIHGPPNSGKSSFAMSLIKVLKGRVLSFVNSRSQFWLQPLGECKIALIDDVTDPCWLYMDTYLRNGLDGHFVSLDCKYKAPVQTKFLPLLLTSNINVHEETNYRYLHSRIKGFEFPNPFPMKSDNTPQFELTDQSWKSFFERLWTQLELSDQEEEEEGEHGETQRAFQCSARSANEHI</sequence>
<gene>
    <name evidence="1" type="primary">E1</name>
</gene>
<accession>O40619</accession>
<feature type="chain" id="PRO_0000133162" description="Replication protein E1">
    <location>
        <begin position="1"/>
        <end position="606"/>
    </location>
</feature>
<feature type="domain" description="SF3 helicase" evidence="1">
    <location>
        <begin position="406"/>
        <end position="556"/>
    </location>
</feature>
<feature type="region of interest" description="DNA-binding region" evidence="1">
    <location>
        <begin position="144"/>
        <end position="307"/>
    </location>
</feature>
<feature type="region of interest" description="Disordered" evidence="2">
    <location>
        <begin position="581"/>
        <end position="606"/>
    </location>
</feature>
<feature type="short sequence motif" description="Nuclear localization signal" evidence="1">
    <location>
        <begin position="76"/>
        <end position="78"/>
    </location>
</feature>
<feature type="compositionally biased region" description="Polar residues" evidence="2">
    <location>
        <begin position="593"/>
        <end position="606"/>
    </location>
</feature>
<feature type="binding site" evidence="1">
    <location>
        <begin position="432"/>
        <end position="439"/>
    </location>
    <ligand>
        <name>ATP</name>
        <dbReference type="ChEBI" id="CHEBI:30616"/>
    </ligand>
</feature>
<feature type="modified residue" description="Phosphoserine; by host" evidence="1">
    <location>
        <position position="81"/>
    </location>
</feature>
<feature type="modified residue" description="Phosphoserine; by host" evidence="1">
    <location>
        <position position="89"/>
    </location>
</feature>
<feature type="cross-link" description="Glycyl lysine isopeptide (Lys-Gly) (interchain with G-Cter in SUMO)" evidence="1">
    <location>
        <position position="513"/>
    </location>
</feature>
<reference key="1">
    <citation type="submission" date="1997-01" db="EMBL/GenBank/DDBJ databases">
        <authorList>
            <person name="Bens G."/>
            <person name="Pfister H."/>
            <person name="Wieland U."/>
        </authorList>
    </citation>
    <scope>NUCLEOTIDE SEQUENCE [GENOMIC DNA]</scope>
</reference>
<organism>
    <name type="scientific">Human papillomavirus type RTRX7</name>
    <dbReference type="NCBI Taxonomy" id="79691"/>
    <lineage>
        <taxon>Viruses</taxon>
        <taxon>Monodnaviria</taxon>
        <taxon>Shotokuvirae</taxon>
        <taxon>Cossaviricota</taxon>
        <taxon>Papovaviricetes</taxon>
        <taxon>Zurhausenvirales</taxon>
        <taxon>Papillomaviridae</taxon>
        <taxon>Firstpapillomavirinae</taxon>
        <taxon>Betapapillomavirus</taxon>
        <taxon>Betapapillomavirus 1</taxon>
    </lineage>
</organism>
<proteinExistence type="inferred from homology"/>
<name>VE1_HPVR7</name>
<keyword id="KW-0067">ATP-binding</keyword>
<keyword id="KW-0235">DNA replication</keyword>
<keyword id="KW-0238">DNA-binding</keyword>
<keyword id="KW-0244">Early protein</keyword>
<keyword id="KW-0347">Helicase</keyword>
<keyword id="KW-1048">Host nucleus</keyword>
<keyword id="KW-0378">Hydrolase</keyword>
<keyword id="KW-0413">Isomerase</keyword>
<keyword id="KW-1017">Isopeptide bond</keyword>
<keyword id="KW-0547">Nucleotide-binding</keyword>
<keyword id="KW-0597">Phosphoprotein</keyword>
<keyword id="KW-0832">Ubl conjugation</keyword>
<comment type="function">
    <text evidence="1">ATP-dependent DNA 3'-5' helicase required for initiation of viral DNA replication. It forms a complex with the viral E2 protein. The E1-E2 complex binds to the replication origin which contains binding sites for both proteins. During the initial step, a dimer of E1 interacts with a dimer of protein E2 leading to a complex that binds the viral origin of replication with high specificity. Then, a second dimer of E1 displaces the E2 dimer in an ATP-dependent manner to form the E1 tetramer. Following this, two E1 monomers are added to each half of the site, which results in the formation of two E1 trimers on the viral ori. Subsequently, two hexamers will be created. The double hexamer acts as a bi-directional helicase machinery and unwinds the viral DNA and then recruits the host DNA polymerase to start replication.</text>
</comment>
<comment type="catalytic activity">
    <reaction evidence="1">
        <text>Couples ATP hydrolysis with the unwinding of duplex DNA by translocating in the 3'-5' direction.</text>
        <dbReference type="EC" id="5.6.2.4"/>
    </reaction>
</comment>
<comment type="catalytic activity">
    <reaction evidence="1">
        <text>ATP + H2O = ADP + phosphate + H(+)</text>
        <dbReference type="Rhea" id="RHEA:13065"/>
        <dbReference type="ChEBI" id="CHEBI:15377"/>
        <dbReference type="ChEBI" id="CHEBI:15378"/>
        <dbReference type="ChEBI" id="CHEBI:30616"/>
        <dbReference type="ChEBI" id="CHEBI:43474"/>
        <dbReference type="ChEBI" id="CHEBI:456216"/>
        <dbReference type="EC" id="5.6.2.4"/>
    </reaction>
</comment>
<comment type="subunit">
    <text evidence="1">Can form hexamers. Interacts with E2 protein; this interaction increases E1 DNA binding specificity. Interacts with host DNA polymerase subunit POLA2. Interacts with host single stranded DNA-binding protein RPA1. Interacts with host TOP1; this interaction stimulates the enzymatic activity of TOP1.</text>
</comment>
<comment type="subcellular location">
    <subcellularLocation>
        <location evidence="1">Host nucleus</location>
    </subcellularLocation>
</comment>
<comment type="PTM">
    <text evidence="1">Phosphorylated.</text>
</comment>
<comment type="PTM">
    <text evidence="1">Sumoylated.</text>
</comment>
<comment type="similarity">
    <text evidence="1">Belongs to the papillomaviridae E1 protein family.</text>
</comment>
<organismHost>
    <name type="scientific">Homo sapiens</name>
    <name type="common">Human</name>
    <dbReference type="NCBI Taxonomy" id="9606"/>
</organismHost>